<organism>
    <name type="scientific">Brassica napus</name>
    <name type="common">Rape</name>
    <dbReference type="NCBI Taxonomy" id="3708"/>
    <lineage>
        <taxon>Eukaryota</taxon>
        <taxon>Viridiplantae</taxon>
        <taxon>Streptophyta</taxon>
        <taxon>Embryophyta</taxon>
        <taxon>Tracheophyta</taxon>
        <taxon>Spermatophyta</taxon>
        <taxon>Magnoliopsida</taxon>
        <taxon>eudicotyledons</taxon>
        <taxon>Gunneridae</taxon>
        <taxon>Pentapetalae</taxon>
        <taxon>rosids</taxon>
        <taxon>malvids</taxon>
        <taxon>Brassicales</taxon>
        <taxon>Brassicaceae</taxon>
        <taxon>Brassiceae</taxon>
        <taxon>Brassica</taxon>
    </lineage>
</organism>
<accession>Q9FR62</accession>
<reference key="1">
    <citation type="submission" date="1999-05" db="EMBL/GenBank/DDBJ databases">
        <title>Bnp23, the plant ortholog of mammalian p23, is upregulated during microspore embryogenesis in Brassica napus.</title>
        <authorList>
            <person name="Cordewener J.H.G."/>
            <person name="Jansen H.J."/>
            <person name="Hause G."/>
            <person name="Fiers M.A."/>
            <person name="van Lookeren Campagne M.M."/>
        </authorList>
    </citation>
    <scope>NUCLEOTIDE SEQUENCE [MRNA]</scope>
    <source>
        <strain>cv. Topas</strain>
    </source>
</reference>
<reference key="2">
    <citation type="journal article" date="2010" name="Cell Stress Chaperones">
        <title>Characterization of plant p23-like proteins for their co-chaperone activities.</title>
        <authorList>
            <person name="Zhang Z."/>
            <person name="Sullivan W."/>
            <person name="Felts S.J."/>
            <person name="Prasad B.D."/>
            <person name="Toft D.O."/>
            <person name="Krishna P."/>
        </authorList>
    </citation>
    <scope>INDUCTION BY HEAT</scope>
    <scope>INTERACTION WITH HSP90</scope>
    <scope>FUNCTION</scope>
</reference>
<keyword id="KW-0143">Chaperone</keyword>
<dbReference type="EMBL" id="AF153128">
    <property type="protein sequence ID" value="AAG41763.1"/>
    <property type="molecule type" value="mRNA"/>
</dbReference>
<dbReference type="RefSeq" id="NP_001412493.1">
    <property type="nucleotide sequence ID" value="NM_001425564.1"/>
</dbReference>
<dbReference type="SMR" id="Q9FR62"/>
<dbReference type="GeneID" id="106399369"/>
<dbReference type="OrthoDB" id="1564555at2759"/>
<dbReference type="GO" id="GO:0101031">
    <property type="term" value="C:protein folding chaperone complex"/>
    <property type="evidence" value="ECO:0000314"/>
    <property type="project" value="UniProtKB"/>
</dbReference>
<dbReference type="GO" id="GO:0051879">
    <property type="term" value="F:Hsp90 protein binding"/>
    <property type="evidence" value="ECO:0000314"/>
    <property type="project" value="UniProtKB"/>
</dbReference>
<dbReference type="GO" id="GO:0051087">
    <property type="term" value="F:protein-folding chaperone binding"/>
    <property type="evidence" value="ECO:0000314"/>
    <property type="project" value="UniProtKB"/>
</dbReference>
<dbReference type="GO" id="GO:0051085">
    <property type="term" value="P:chaperone cofactor-dependent protein refolding"/>
    <property type="evidence" value="ECO:0000314"/>
    <property type="project" value="UniProtKB"/>
</dbReference>
<dbReference type="GO" id="GO:0009408">
    <property type="term" value="P:response to heat"/>
    <property type="evidence" value="ECO:0000270"/>
    <property type="project" value="UniProtKB"/>
</dbReference>
<dbReference type="CDD" id="cd06465">
    <property type="entry name" value="p23_hB-ind1_like"/>
    <property type="match status" value="1"/>
</dbReference>
<dbReference type="FunFam" id="2.60.40.790:FF:000013">
    <property type="entry name" value="Very-long-chain (3R)-3-hydroxyacyl-CoA dehydratase"/>
    <property type="match status" value="1"/>
</dbReference>
<dbReference type="Gene3D" id="2.60.40.790">
    <property type="match status" value="1"/>
</dbReference>
<dbReference type="InterPro" id="IPR007052">
    <property type="entry name" value="CS_dom"/>
</dbReference>
<dbReference type="InterPro" id="IPR008978">
    <property type="entry name" value="HSP20-like_chaperone"/>
</dbReference>
<dbReference type="InterPro" id="IPR045250">
    <property type="entry name" value="p23-like"/>
</dbReference>
<dbReference type="PANTHER" id="PTHR22932:SF11">
    <property type="entry name" value="CO-CHAPERONE PROTEIN P23"/>
    <property type="match status" value="1"/>
</dbReference>
<dbReference type="PANTHER" id="PTHR22932">
    <property type="entry name" value="TELOMERASE-BINDING PROTEIN P23 HSP90 CO-CHAPERONE"/>
    <property type="match status" value="1"/>
</dbReference>
<dbReference type="Pfam" id="PF04969">
    <property type="entry name" value="CS"/>
    <property type="match status" value="1"/>
</dbReference>
<dbReference type="SUPFAM" id="SSF49764">
    <property type="entry name" value="HSP20-like chaperones"/>
    <property type="match status" value="1"/>
</dbReference>
<dbReference type="PROSITE" id="PS51203">
    <property type="entry name" value="CS"/>
    <property type="match status" value="1"/>
</dbReference>
<proteinExistence type="evidence at protein level"/>
<protein>
    <recommendedName>
        <fullName evidence="5">Co-chaperone protein p23-1</fullName>
    </recommendedName>
    <alternativeName>
        <fullName evidence="4">Bnp23-1</fullName>
    </alternativeName>
</protein>
<name>P23A_BRANA</name>
<evidence type="ECO:0000255" key="1">
    <source>
        <dbReference type="PROSITE-ProRule" id="PRU00547"/>
    </source>
</evidence>
<evidence type="ECO:0000256" key="2">
    <source>
        <dbReference type="SAM" id="MobiDB-lite"/>
    </source>
</evidence>
<evidence type="ECO:0000269" key="3">
    <source>
    </source>
</evidence>
<evidence type="ECO:0000303" key="4">
    <source>
    </source>
</evidence>
<evidence type="ECO:0000305" key="5"/>
<evidence type="ECO:0000312" key="6">
    <source>
        <dbReference type="EMBL" id="AAG41763.1"/>
    </source>
</evidence>
<comment type="function">
    <text evidence="3">Acts as a co-chaperone for HSP90.</text>
</comment>
<comment type="subunit">
    <text evidence="3">Interacts with HSP90 in an ATP-dependent manner.</text>
</comment>
<comment type="induction">
    <text evidence="3">Induced by heat shock treatment.</text>
</comment>
<comment type="similarity">
    <text evidence="5">Belongs to the p23/wos2 family.</text>
</comment>
<sequence>MSRHPTVKWAQRSDWVYITVELPDAEDVKLKLEPEGKFFFSATSGASKTLYEVDLDLLDSVDVNESKASVSSRSVFYLVKKAESKWWNRLTKPEGKHPLYLKVDWDKWVDEDDEDKGGEGDMDFGDFDFNGLNMGDTDEIGEEVAEEDGDGEGETAAETKEKKIDGEKDEEGVNAKKD</sequence>
<gene>
    <name evidence="5" type="primary">P23-1</name>
    <name evidence="6" type="synonym">P23</name>
</gene>
<feature type="chain" id="PRO_0000444947" description="Co-chaperone protein p23-1">
    <location>
        <begin position="1"/>
        <end position="178"/>
    </location>
</feature>
<feature type="domain" description="CS" evidence="1">
    <location>
        <begin position="2"/>
        <end position="91"/>
    </location>
</feature>
<feature type="region of interest" description="Disordered" evidence="2">
    <location>
        <begin position="112"/>
        <end position="178"/>
    </location>
</feature>
<feature type="compositionally biased region" description="Acidic residues" evidence="2">
    <location>
        <begin position="112"/>
        <end position="126"/>
    </location>
</feature>
<feature type="compositionally biased region" description="Acidic residues" evidence="2">
    <location>
        <begin position="136"/>
        <end position="155"/>
    </location>
</feature>
<feature type="compositionally biased region" description="Basic and acidic residues" evidence="2">
    <location>
        <begin position="157"/>
        <end position="178"/>
    </location>
</feature>